<organism>
    <name type="scientific">Synechococcus sp. (strain RCC307)</name>
    <dbReference type="NCBI Taxonomy" id="316278"/>
    <lineage>
        <taxon>Bacteria</taxon>
        <taxon>Bacillati</taxon>
        <taxon>Cyanobacteriota</taxon>
        <taxon>Cyanophyceae</taxon>
        <taxon>Synechococcales</taxon>
        <taxon>Synechococcaceae</taxon>
        <taxon>Synechococcus</taxon>
    </lineage>
</organism>
<keyword id="KW-0560">Oxidoreductase</keyword>
<keyword id="KW-1185">Reference proteome</keyword>
<proteinExistence type="inferred from homology"/>
<accession>A5GVQ6</accession>
<sequence>MTTPRQSSLEPLSIANWRWQPFLDHACGALQPLELEPYPVAPEFLLQTSQTGSKSKPVQVTTATWACKTNKLRQVRAACVEAGAAASVLNFVVNPSTSYDLPFFGADLVTLPAGHLLALDLQPALKTDAEHTKAVWERLMPIFERWQQRLPGGGPIPEEAKPYFSPGFLWTRIPLGSEGDALIEEAVKPAFRDYLELYLQLVHEAEEVSPERSAELLAGQKRYTSYRAEKDPARGMLTRFHGAEWTEAYIHGVLFDLDKKWM</sequence>
<feature type="chain" id="PRO_1000046930" description="Phycoerythrobilin:ferredoxin oxidoreductase">
    <location>
        <begin position="1"/>
        <end position="262"/>
    </location>
</feature>
<comment type="function">
    <text evidence="1">Catalyzes the two-electron reduction of the C2 and C3(1) diene system of 15,16-dihydrobiliverdin.</text>
</comment>
<comment type="catalytic activity">
    <reaction evidence="1">
        <text>(3Z)-phycoerythrobilin + oxidized 2[4Fe-4S]-[ferredoxin] = 15,16-dihydrobiliverdin + reduced 2[4Fe-4S]-[ferredoxin] + 2 H(+)</text>
        <dbReference type="Rhea" id="RHEA:22092"/>
        <dbReference type="Rhea" id="RHEA-COMP:10002"/>
        <dbReference type="Rhea" id="RHEA-COMP:10004"/>
        <dbReference type="ChEBI" id="CHEBI:15378"/>
        <dbReference type="ChEBI" id="CHEBI:33722"/>
        <dbReference type="ChEBI" id="CHEBI:33723"/>
        <dbReference type="ChEBI" id="CHEBI:57438"/>
        <dbReference type="ChEBI" id="CHEBI:57899"/>
        <dbReference type="EC" id="1.3.7.3"/>
    </reaction>
</comment>
<comment type="similarity">
    <text evidence="1">Belongs to the HY2 family.</text>
</comment>
<reference key="1">
    <citation type="submission" date="2006-05" db="EMBL/GenBank/DDBJ databases">
        <authorList>
            <consortium name="Genoscope"/>
        </authorList>
    </citation>
    <scope>NUCLEOTIDE SEQUENCE [LARGE SCALE GENOMIC DNA]</scope>
    <source>
        <strain>RCC307</strain>
    </source>
</reference>
<dbReference type="EC" id="1.3.7.3" evidence="1"/>
<dbReference type="EMBL" id="CT978603">
    <property type="protein sequence ID" value="CAK28965.1"/>
    <property type="molecule type" value="Genomic_DNA"/>
</dbReference>
<dbReference type="SMR" id="A5GVQ6"/>
<dbReference type="STRING" id="316278.SynRCC307_2062"/>
<dbReference type="KEGG" id="syr:SynRCC307_2062"/>
<dbReference type="eggNOG" id="ENOG502Z8GK">
    <property type="taxonomic scope" value="Bacteria"/>
</dbReference>
<dbReference type="HOGENOM" id="CLU_086208_1_0_3"/>
<dbReference type="OrthoDB" id="421401at2"/>
<dbReference type="Proteomes" id="UP000001115">
    <property type="component" value="Chromosome"/>
</dbReference>
<dbReference type="GO" id="GO:0050897">
    <property type="term" value="F:cobalt ion binding"/>
    <property type="evidence" value="ECO:0007669"/>
    <property type="project" value="InterPro"/>
</dbReference>
<dbReference type="GO" id="GO:0050618">
    <property type="term" value="F:phycoerythrobilin:ferredoxin oxidoreductase activity"/>
    <property type="evidence" value="ECO:0007669"/>
    <property type="project" value="UniProtKB-UniRule"/>
</dbReference>
<dbReference type="GO" id="GO:0010024">
    <property type="term" value="P:phytochromobilin biosynthetic process"/>
    <property type="evidence" value="ECO:0007669"/>
    <property type="project" value="InterPro"/>
</dbReference>
<dbReference type="Gene3D" id="3.40.1500.20">
    <property type="match status" value="1"/>
</dbReference>
<dbReference type="HAMAP" id="MF_00793">
    <property type="entry name" value="PebB"/>
    <property type="match status" value="1"/>
</dbReference>
<dbReference type="InterPro" id="IPR009249">
    <property type="entry name" value="Ferredoxin-dep_bilin_Rdtase"/>
</dbReference>
<dbReference type="InterPro" id="IPR022827">
    <property type="entry name" value="Phycoerythrobilin_Fdx_Rdtase"/>
</dbReference>
<dbReference type="NCBIfam" id="NF009722">
    <property type="entry name" value="PRK13249.1"/>
    <property type="match status" value="1"/>
</dbReference>
<dbReference type="PANTHER" id="PTHR34557">
    <property type="entry name" value="PHYTOCHROMOBILIN:FERREDOXIN OXIDOREDUCTASE, CHLOROPLASTIC"/>
    <property type="match status" value="1"/>
</dbReference>
<dbReference type="PANTHER" id="PTHR34557:SF1">
    <property type="entry name" value="PHYTOCHROMOBILIN:FERREDOXIN OXIDOREDUCTASE, CHLOROPLASTIC"/>
    <property type="match status" value="1"/>
</dbReference>
<dbReference type="Pfam" id="PF05996">
    <property type="entry name" value="Fe_bilin_red"/>
    <property type="match status" value="1"/>
</dbReference>
<name>PEBB_SYNR3</name>
<evidence type="ECO:0000255" key="1">
    <source>
        <dbReference type="HAMAP-Rule" id="MF_00793"/>
    </source>
</evidence>
<protein>
    <recommendedName>
        <fullName evidence="1">Phycoerythrobilin:ferredoxin oxidoreductase</fullName>
        <ecNumber evidence="1">1.3.7.3</ecNumber>
    </recommendedName>
</protein>
<gene>
    <name evidence="1" type="primary">pebB</name>
    <name type="ordered locus">SynRCC307_2062</name>
</gene>